<dbReference type="EMBL" id="AK016553">
    <property type="protein sequence ID" value="BAB30300.1"/>
    <property type="molecule type" value="mRNA"/>
</dbReference>
<dbReference type="EMBL" id="AC138228">
    <property type="status" value="NOT_ANNOTATED_CDS"/>
    <property type="molecule type" value="Genomic_DNA"/>
</dbReference>
<dbReference type="EMBL" id="CT033797">
    <property type="status" value="NOT_ANNOTATED_CDS"/>
    <property type="molecule type" value="Genomic_DNA"/>
</dbReference>
<dbReference type="EMBL" id="CH466640">
    <property type="protein sequence ID" value="EDL40335.1"/>
    <property type="molecule type" value="Genomic_DNA"/>
</dbReference>
<dbReference type="CCDS" id="CCDS50056.1"/>
<dbReference type="RefSeq" id="NP_083178.1">
    <property type="nucleotide sequence ID" value="NM_028902.1"/>
</dbReference>
<dbReference type="RefSeq" id="XP_006525094.1">
    <property type="nucleotide sequence ID" value="XM_006525031.1"/>
</dbReference>
<dbReference type="RefSeq" id="XP_006525095.1">
    <property type="nucleotide sequence ID" value="XM_006525032.3"/>
</dbReference>
<dbReference type="RefSeq" id="XP_006525096.1">
    <property type="nucleotide sequence ID" value="XM_006525033.3"/>
</dbReference>
<dbReference type="PDB" id="7Z8Z">
    <property type="method" value="X-ray"/>
    <property type="resolution" value="1.50 A"/>
    <property type="chains" value="A/C=22-81"/>
</dbReference>
<dbReference type="PDBsum" id="7Z8Z"/>
<dbReference type="SMR" id="Q9D4G2"/>
<dbReference type="FunCoup" id="Q9D4G2">
    <property type="interactions" value="171"/>
</dbReference>
<dbReference type="IntAct" id="Q9D4G2">
    <property type="interactions" value="2"/>
</dbReference>
<dbReference type="MINT" id="Q9D4G2"/>
<dbReference type="STRING" id="10090.ENSMUSP00000157466"/>
<dbReference type="PhosphoSitePlus" id="Q9D4G2"/>
<dbReference type="PaxDb" id="10090-ENSMUSP00000002145"/>
<dbReference type="PeptideAtlas" id="Q9D4G2"/>
<dbReference type="ProteomicsDB" id="273319"/>
<dbReference type="Antibodypedia" id="9965">
    <property type="antibodies" value="113 antibodies from 22 providers"/>
</dbReference>
<dbReference type="Ensembl" id="ENSMUST00000002145.12">
    <property type="protein sequence ID" value="ENSMUSP00000002145.6"/>
    <property type="gene ID" value="ENSMUSG00000002076.13"/>
</dbReference>
<dbReference type="Ensembl" id="ENSMUST00000238192.2">
    <property type="protein sequence ID" value="ENSMUSP00000157466.2"/>
    <property type="gene ID" value="ENSMUSG00000002076.13"/>
</dbReference>
<dbReference type="GeneID" id="74377"/>
<dbReference type="KEGG" id="mmu:74377"/>
<dbReference type="UCSC" id="uc008bvs.2">
    <property type="organism name" value="mouse"/>
</dbReference>
<dbReference type="AGR" id="MGI:1921627"/>
<dbReference type="CTD" id="11077"/>
<dbReference type="MGI" id="MGI:1921627">
    <property type="gene designation" value="Hsf2bp"/>
</dbReference>
<dbReference type="VEuPathDB" id="HostDB:ENSMUSG00000002076"/>
<dbReference type="eggNOG" id="ENOG502QSZY">
    <property type="taxonomic scope" value="Eukaryota"/>
</dbReference>
<dbReference type="GeneTree" id="ENSGT00390000008490"/>
<dbReference type="HOGENOM" id="CLU_068321_1_0_1"/>
<dbReference type="InParanoid" id="Q9D4G2"/>
<dbReference type="OMA" id="CTEMGAT"/>
<dbReference type="OrthoDB" id="10065854at2759"/>
<dbReference type="PhylomeDB" id="Q9D4G2"/>
<dbReference type="TreeFam" id="TF331782"/>
<dbReference type="BioGRID-ORCS" id="74377">
    <property type="hits" value="4 hits in 83 CRISPR screens"/>
</dbReference>
<dbReference type="ChiTaRS" id="Hsf2bp">
    <property type="organism name" value="mouse"/>
</dbReference>
<dbReference type="PRO" id="PR:Q9D4G2"/>
<dbReference type="Proteomes" id="UP000000589">
    <property type="component" value="Chromosome 17"/>
</dbReference>
<dbReference type="RNAct" id="Q9D4G2">
    <property type="molecule type" value="protein"/>
</dbReference>
<dbReference type="Bgee" id="ENSMUSG00000002076">
    <property type="expression patterns" value="Expressed in animal zygote and 89 other cell types or tissues"/>
</dbReference>
<dbReference type="ExpressionAtlas" id="Q9D4G2">
    <property type="expression patterns" value="baseline and differential"/>
</dbReference>
<dbReference type="GO" id="GO:0005694">
    <property type="term" value="C:chromosome"/>
    <property type="evidence" value="ECO:0000314"/>
    <property type="project" value="UniProtKB"/>
</dbReference>
<dbReference type="GO" id="GO:0005829">
    <property type="term" value="C:cytosol"/>
    <property type="evidence" value="ECO:0007669"/>
    <property type="project" value="Ensembl"/>
</dbReference>
<dbReference type="GO" id="GO:0005654">
    <property type="term" value="C:nucleoplasm"/>
    <property type="evidence" value="ECO:0007669"/>
    <property type="project" value="Ensembl"/>
</dbReference>
<dbReference type="GO" id="GO:1990918">
    <property type="term" value="P:double-strand break repair involved in meiotic recombination"/>
    <property type="evidence" value="ECO:0000314"/>
    <property type="project" value="UniProtKB"/>
</dbReference>
<dbReference type="GO" id="GO:0007144">
    <property type="term" value="P:female meiosis I"/>
    <property type="evidence" value="ECO:0000315"/>
    <property type="project" value="UniProtKB"/>
</dbReference>
<dbReference type="GO" id="GO:0007141">
    <property type="term" value="P:male meiosis I"/>
    <property type="evidence" value="ECO:0000314"/>
    <property type="project" value="UniProtKB"/>
</dbReference>
<dbReference type="GO" id="GO:0007283">
    <property type="term" value="P:spermatogenesis"/>
    <property type="evidence" value="ECO:0000314"/>
    <property type="project" value="UniProtKB"/>
</dbReference>
<dbReference type="Gene3D" id="1.25.10.10">
    <property type="entry name" value="Leucine-rich Repeat Variant"/>
    <property type="match status" value="1"/>
</dbReference>
<dbReference type="InterPro" id="IPR011989">
    <property type="entry name" value="ARM-like"/>
</dbReference>
<dbReference type="InterPro" id="IPR016024">
    <property type="entry name" value="ARM-type_fold"/>
</dbReference>
<dbReference type="InterPro" id="IPR039584">
    <property type="entry name" value="HSF2BP"/>
</dbReference>
<dbReference type="PANTHER" id="PTHR15434">
    <property type="entry name" value="HEAT SHOCK FACTOR 2-BINDING PROTEIN"/>
    <property type="match status" value="1"/>
</dbReference>
<dbReference type="PANTHER" id="PTHR15434:SF2">
    <property type="entry name" value="HEAT SHOCK FACTOR 2-BINDING PROTEIN"/>
    <property type="match status" value="1"/>
</dbReference>
<dbReference type="SUPFAM" id="SSF48371">
    <property type="entry name" value="ARM repeat"/>
    <property type="match status" value="1"/>
</dbReference>
<evidence type="ECO:0000250" key="1">
    <source>
        <dbReference type="UniProtKB" id="O75031"/>
    </source>
</evidence>
<evidence type="ECO:0000255" key="2"/>
<evidence type="ECO:0000256" key="3">
    <source>
        <dbReference type="SAM" id="MobiDB-lite"/>
    </source>
</evidence>
<evidence type="ECO:0000269" key="4">
    <source>
    </source>
</evidence>
<evidence type="ECO:0000269" key="5">
    <source>
    </source>
</evidence>
<evidence type="ECO:0000269" key="6">
    <source>
    </source>
</evidence>
<evidence type="ECO:0000269" key="7">
    <source>
    </source>
</evidence>
<evidence type="ECO:0000269" key="8">
    <source>
    </source>
</evidence>
<evidence type="ECO:0000269" key="9">
    <source>
    </source>
</evidence>
<evidence type="ECO:0000269" key="10">
    <source>
    </source>
</evidence>
<evidence type="ECO:0000303" key="11">
    <source>
    </source>
</evidence>
<evidence type="ECO:0000303" key="12">
    <source>
    </source>
</evidence>
<evidence type="ECO:0000303" key="13">
    <source>
    </source>
</evidence>
<evidence type="ECO:0000305" key="14"/>
<evidence type="ECO:0000312" key="15">
    <source>
        <dbReference type="EMBL" id="BAB30300.1"/>
    </source>
</evidence>
<evidence type="ECO:0000312" key="16">
    <source>
        <dbReference type="EMBL" id="EDL40335.1"/>
    </source>
</evidence>
<evidence type="ECO:0000312" key="17">
    <source>
        <dbReference type="MGI" id="MGI:1921627"/>
    </source>
</evidence>
<evidence type="ECO:0000312" key="18">
    <source>
        <dbReference type="Proteomes" id="UP000000589"/>
    </source>
</evidence>
<evidence type="ECO:0007829" key="19">
    <source>
        <dbReference type="PDB" id="7Z8Z"/>
    </source>
</evidence>
<gene>
    <name evidence="17" type="primary">Hsf2bp</name>
    <name evidence="11 12 13" type="synonym">Meilb2</name>
</gene>
<proteinExistence type="evidence at protein level"/>
<sequence>MAATVGDGSGTEEACRNMESKEEFVKVRKKDLERLTTEVMQIRDFLPRILNGELLESFQKLKMVEKNLERKEQELEQLIMDREHFKARLETAQADSGREKKEKLALRQQLNEAKQQLLQQAEYCTQMGAVTCTLLWGVSSSEEVVKTILGGDKALKFFNITGQTMESFVKSLDGDVKEVDSDENQFVFALAGIVTNVAAIACGREFLVNSSRVLLDTMLQLLGDLKPGQCTKLKVLMLMSLYNVSINSKGLKYITESPGFIPLLWWLLSDPDAEVCLHTLRLIQSVVLEPDVFSKVASELQSSLPLQRILAMSKSRNSHLQSAAQELLEDLRALDCNV</sequence>
<comment type="function">
    <text evidence="1 4 5 6 7 9 10">Meiotic recombination factor component of recombination bridges involved in meiotic double-strand break repair. Modulates the localization of recombinases DMC1:RAD51 to meiotic double-strand break (DSB) sites through the interaction with BRCA2 and its recruitment during meiotic recombination. Indispensable for the DSB repair, homologous synapsis, and crossover formation that are needed for progression past metaphase I, is essential for spermatogenesis and male fertility (PubMed:30760716, PubMed:31242413, PubMed:32345962, PubMed:32463460). Required for proper recombinase recruitment in female meiosis (PubMed:30760716, PubMed:32845237). Inhibits BNC1 transcriptional activity during spermatogenesis, probably by sequestering it in the cytoplasm (PubMed:23707421). May be involved in modulating HSF2 activation in testis (By similarity).</text>
</comment>
<comment type="subunit">
    <text evidence="1 4 5 6 7 8 9 10">Interacts (via C-terminus) with BNC1 (PubMed:23707421). Associates with HSF2. The interaction seems to occur between the trimerization domain of HSF2 and the N-terminal hydrophilic region of HSF2BP (By similarity). Interacts (via N-terminus) with BRME1 (PubMed:32345962, PubMed:32460033, PubMed:32463460). Interacts with BRCA2 and BRME1; the interactions are direct and allow the formation of a ternary complex (PubMed:30760716, PubMed:31242413, PubMed:32345962, PubMed:32460033, PubMed:32463460, PubMed:32845237). The complex BRME1:HSF2BP:BRCA2 interacts with SPATA22, MEIOB and RAD51 (PubMed:30760716, PubMed:32345962).</text>
</comment>
<comment type="interaction">
    <interactant intactId="EBI-8527688">
        <id>Q9D4G2</id>
    </interactant>
    <interactant intactId="EBI-8527667">
        <id>O35914</id>
        <label>Bnc1</label>
    </interactant>
    <organismsDiffer>false</organismsDiffer>
    <experiments>4</experiments>
</comment>
<comment type="subcellular location">
    <subcellularLocation>
        <location evidence="4 10">Cytoplasm</location>
    </subcellularLocation>
    <subcellularLocation>
        <location evidence="5 6 7 9 10">Chromosome</location>
    </subcellularLocation>
    <text evidence="5 6 7 9 10">Localizes on double-strand breaks (DSBs) in mitotic and meiotic chromosomes.</text>
</comment>
<comment type="tissue specificity">
    <text evidence="4 7 8">Expressed in testis and, to a lesser extent, in lung and muscle.</text>
</comment>
<comment type="developmental stage">
    <text evidence="4 5">Detected at low levels from birth to 3 days post partum, thereafter the expression level increases from 5 days post partum to adult. In spermatocytes, shows punctate localization along chromosome axes specifically in early meiotic prophase I cells. Foci start to appear from the leptotene stage, reach their greatest number in the zygotene stage, persist until the early pachytene stage, and finally disappear in the late pachytene stage (PubMed:30760716).</text>
</comment>
<comment type="PTM">
    <text evidence="1">Sumoylated by UBE2I in response to MEKK1-mediated stimuli.</text>
</comment>
<comment type="disruption phenotype">
    <text evidence="5 6 10">Male mutants are infertile (PubMed:30760716, PubMed:31242413). They have smaller-than-normal testes with no sperm (PubMed:30760716, PubMed:31242413). Female mutants exhibit a fertility with 40% reduction in litter size compared to wild-type females. They show reduced follicle formation (PubMed:30760716, PubMed:32845237). Mutant oocytes show a delay in prophase I progression with the majority of cells at zygotene stage in 17.5 days post-coitum (dpc) females (PubMed:32845237).</text>
</comment>
<protein>
    <recommendedName>
        <fullName evidence="17">Heat shock factor 2-binding protein</fullName>
    </recommendedName>
</protein>
<name>HSF2B_MOUSE</name>
<reference evidence="15" key="1">
    <citation type="journal article" date="2005" name="Science">
        <title>The transcriptional landscape of the mammalian genome.</title>
        <authorList>
            <person name="Carninci P."/>
            <person name="Kasukawa T."/>
            <person name="Katayama S."/>
            <person name="Gough J."/>
            <person name="Frith M.C."/>
            <person name="Maeda N."/>
            <person name="Oyama R."/>
            <person name="Ravasi T."/>
            <person name="Lenhard B."/>
            <person name="Wells C."/>
            <person name="Kodzius R."/>
            <person name="Shimokawa K."/>
            <person name="Bajic V.B."/>
            <person name="Brenner S.E."/>
            <person name="Batalov S."/>
            <person name="Forrest A.R."/>
            <person name="Zavolan M."/>
            <person name="Davis M.J."/>
            <person name="Wilming L.G."/>
            <person name="Aidinis V."/>
            <person name="Allen J.E."/>
            <person name="Ambesi-Impiombato A."/>
            <person name="Apweiler R."/>
            <person name="Aturaliya R.N."/>
            <person name="Bailey T.L."/>
            <person name="Bansal M."/>
            <person name="Baxter L."/>
            <person name="Beisel K.W."/>
            <person name="Bersano T."/>
            <person name="Bono H."/>
            <person name="Chalk A.M."/>
            <person name="Chiu K.P."/>
            <person name="Choudhary V."/>
            <person name="Christoffels A."/>
            <person name="Clutterbuck D.R."/>
            <person name="Crowe M.L."/>
            <person name="Dalla E."/>
            <person name="Dalrymple B.P."/>
            <person name="de Bono B."/>
            <person name="Della Gatta G."/>
            <person name="di Bernardo D."/>
            <person name="Down T."/>
            <person name="Engstrom P."/>
            <person name="Fagiolini M."/>
            <person name="Faulkner G."/>
            <person name="Fletcher C.F."/>
            <person name="Fukushima T."/>
            <person name="Furuno M."/>
            <person name="Futaki S."/>
            <person name="Gariboldi M."/>
            <person name="Georgii-Hemming P."/>
            <person name="Gingeras T.R."/>
            <person name="Gojobori T."/>
            <person name="Green R.E."/>
            <person name="Gustincich S."/>
            <person name="Harbers M."/>
            <person name="Hayashi Y."/>
            <person name="Hensch T.K."/>
            <person name="Hirokawa N."/>
            <person name="Hill D."/>
            <person name="Huminiecki L."/>
            <person name="Iacono M."/>
            <person name="Ikeo K."/>
            <person name="Iwama A."/>
            <person name="Ishikawa T."/>
            <person name="Jakt M."/>
            <person name="Kanapin A."/>
            <person name="Katoh M."/>
            <person name="Kawasawa Y."/>
            <person name="Kelso J."/>
            <person name="Kitamura H."/>
            <person name="Kitano H."/>
            <person name="Kollias G."/>
            <person name="Krishnan S.P."/>
            <person name="Kruger A."/>
            <person name="Kummerfeld S.K."/>
            <person name="Kurochkin I.V."/>
            <person name="Lareau L.F."/>
            <person name="Lazarevic D."/>
            <person name="Lipovich L."/>
            <person name="Liu J."/>
            <person name="Liuni S."/>
            <person name="McWilliam S."/>
            <person name="Madan Babu M."/>
            <person name="Madera M."/>
            <person name="Marchionni L."/>
            <person name="Matsuda H."/>
            <person name="Matsuzawa S."/>
            <person name="Miki H."/>
            <person name="Mignone F."/>
            <person name="Miyake S."/>
            <person name="Morris K."/>
            <person name="Mottagui-Tabar S."/>
            <person name="Mulder N."/>
            <person name="Nakano N."/>
            <person name="Nakauchi H."/>
            <person name="Ng P."/>
            <person name="Nilsson R."/>
            <person name="Nishiguchi S."/>
            <person name="Nishikawa S."/>
            <person name="Nori F."/>
            <person name="Ohara O."/>
            <person name="Okazaki Y."/>
            <person name="Orlando V."/>
            <person name="Pang K.C."/>
            <person name="Pavan W.J."/>
            <person name="Pavesi G."/>
            <person name="Pesole G."/>
            <person name="Petrovsky N."/>
            <person name="Piazza S."/>
            <person name="Reed J."/>
            <person name="Reid J.F."/>
            <person name="Ring B.Z."/>
            <person name="Ringwald M."/>
            <person name="Rost B."/>
            <person name="Ruan Y."/>
            <person name="Salzberg S.L."/>
            <person name="Sandelin A."/>
            <person name="Schneider C."/>
            <person name="Schoenbach C."/>
            <person name="Sekiguchi K."/>
            <person name="Semple C.A."/>
            <person name="Seno S."/>
            <person name="Sessa L."/>
            <person name="Sheng Y."/>
            <person name="Shibata Y."/>
            <person name="Shimada H."/>
            <person name="Shimada K."/>
            <person name="Silva D."/>
            <person name="Sinclair B."/>
            <person name="Sperling S."/>
            <person name="Stupka E."/>
            <person name="Sugiura K."/>
            <person name="Sultana R."/>
            <person name="Takenaka Y."/>
            <person name="Taki K."/>
            <person name="Tammoja K."/>
            <person name="Tan S.L."/>
            <person name="Tang S."/>
            <person name="Taylor M.S."/>
            <person name="Tegner J."/>
            <person name="Teichmann S.A."/>
            <person name="Ueda H.R."/>
            <person name="van Nimwegen E."/>
            <person name="Verardo R."/>
            <person name="Wei C.L."/>
            <person name="Yagi K."/>
            <person name="Yamanishi H."/>
            <person name="Zabarovsky E."/>
            <person name="Zhu S."/>
            <person name="Zimmer A."/>
            <person name="Hide W."/>
            <person name="Bult C."/>
            <person name="Grimmond S.M."/>
            <person name="Teasdale R.D."/>
            <person name="Liu E.T."/>
            <person name="Brusic V."/>
            <person name="Quackenbush J."/>
            <person name="Wahlestedt C."/>
            <person name="Mattick J.S."/>
            <person name="Hume D.A."/>
            <person name="Kai C."/>
            <person name="Sasaki D."/>
            <person name="Tomaru Y."/>
            <person name="Fukuda S."/>
            <person name="Kanamori-Katayama M."/>
            <person name="Suzuki M."/>
            <person name="Aoki J."/>
            <person name="Arakawa T."/>
            <person name="Iida J."/>
            <person name="Imamura K."/>
            <person name="Itoh M."/>
            <person name="Kato T."/>
            <person name="Kawaji H."/>
            <person name="Kawagashira N."/>
            <person name="Kawashima T."/>
            <person name="Kojima M."/>
            <person name="Kondo S."/>
            <person name="Konno H."/>
            <person name="Nakano K."/>
            <person name="Ninomiya N."/>
            <person name="Nishio T."/>
            <person name="Okada M."/>
            <person name="Plessy C."/>
            <person name="Shibata K."/>
            <person name="Shiraki T."/>
            <person name="Suzuki S."/>
            <person name="Tagami M."/>
            <person name="Waki K."/>
            <person name="Watahiki A."/>
            <person name="Okamura-Oho Y."/>
            <person name="Suzuki H."/>
            <person name="Kawai J."/>
            <person name="Hayashizaki Y."/>
        </authorList>
    </citation>
    <scope>NUCLEOTIDE SEQUENCE [LARGE SCALE MRNA]</scope>
    <source>
        <strain evidence="15">C57BL/6J</strain>
        <tissue evidence="15">Testis</tissue>
    </source>
</reference>
<reference evidence="18" key="2">
    <citation type="journal article" date="2009" name="PLoS Biol.">
        <title>Lineage-specific biology revealed by a finished genome assembly of the mouse.</title>
        <authorList>
            <person name="Church D.M."/>
            <person name="Goodstadt L."/>
            <person name="Hillier L.W."/>
            <person name="Zody M.C."/>
            <person name="Goldstein S."/>
            <person name="She X."/>
            <person name="Bult C.J."/>
            <person name="Agarwala R."/>
            <person name="Cherry J.L."/>
            <person name="DiCuccio M."/>
            <person name="Hlavina W."/>
            <person name="Kapustin Y."/>
            <person name="Meric P."/>
            <person name="Maglott D."/>
            <person name="Birtle Z."/>
            <person name="Marques A.C."/>
            <person name="Graves T."/>
            <person name="Zhou S."/>
            <person name="Teague B."/>
            <person name="Potamousis K."/>
            <person name="Churas C."/>
            <person name="Place M."/>
            <person name="Herschleb J."/>
            <person name="Runnheim R."/>
            <person name="Forrest D."/>
            <person name="Amos-Landgraf J."/>
            <person name="Schwartz D.C."/>
            <person name="Cheng Z."/>
            <person name="Lindblad-Toh K."/>
            <person name="Eichler E.E."/>
            <person name="Ponting C.P."/>
        </authorList>
    </citation>
    <scope>NUCLEOTIDE SEQUENCE [LARGE SCALE GENOMIC DNA]</scope>
    <source>
        <strain evidence="18">C57BL/6J</strain>
    </source>
</reference>
<reference evidence="16" key="3">
    <citation type="submission" date="2005-09" db="EMBL/GenBank/DDBJ databases">
        <authorList>
            <person name="Mural R.J."/>
            <person name="Adams M.D."/>
            <person name="Myers E.W."/>
            <person name="Smith H.O."/>
            <person name="Venter J.C."/>
        </authorList>
    </citation>
    <scope>NUCLEOTIDE SEQUENCE [GENOMIC DNA]</scope>
</reference>
<reference evidence="14" key="4">
    <citation type="journal article" date="2013" name="FEBS Lett.">
        <title>HSF2BP represses BNC1 transcriptional activity by sequestering BNC1 to the cytoplasm.</title>
        <authorList>
            <person name="Wu Y."/>
            <person name="Liao S."/>
            <person name="Wang X."/>
            <person name="Wang S."/>
            <person name="Wang M."/>
            <person name="Han C."/>
        </authorList>
    </citation>
    <scope>FUNCTION</scope>
    <scope>INTERACTION WITH BNC1</scope>
    <scope>SUBCELLULAR LOCATION</scope>
    <scope>TISSUE SPECIFICITY</scope>
    <scope>DEVELOPMENTAL STAGE</scope>
</reference>
<reference key="5">
    <citation type="journal article" date="2019" name="Cell Rep.">
        <title>HSF2BP Interacts with a Conserved Domain of BRCA2 and Is Required for Mouse Spermatogenesis.</title>
        <authorList>
            <person name="Brandsma I."/>
            <person name="Sato K."/>
            <person name="van Rossum-Fikkert S.E."/>
            <person name="van Vliet N."/>
            <person name="Sleddens E."/>
            <person name="Reuter M."/>
            <person name="Odijk H."/>
            <person name="van den Tempel N."/>
            <person name="Dekkers D.H.W."/>
            <person name="Bezstarosti K."/>
            <person name="Demmers J.A.A."/>
            <person name="Maas A."/>
            <person name="Lebbink J."/>
            <person name="Wyman C."/>
            <person name="Essers J."/>
            <person name="van Gent D.C."/>
            <person name="Baarends W.M."/>
            <person name="Knipscheer P."/>
            <person name="Kanaar R."/>
            <person name="Zelensky A.N."/>
        </authorList>
    </citation>
    <scope>FUNCTION</scope>
    <scope>DISRUPTION PHENOTYPE</scope>
    <scope>INTERACTION WITH BRCA2</scope>
    <scope>SUBCELLULAR LOCATION</scope>
</reference>
<reference key="6">
    <citation type="journal article" date="2019" name="Nat. Commun.">
        <title>A meiosis-specific BRCA2 binding protein recruits recombinases to DNA double-strand breaks to ensure homologous recombination.</title>
        <authorList>
            <person name="Zhang J."/>
            <person name="Fujiwara Y."/>
            <person name="Yamamoto S."/>
            <person name="Shibuya H."/>
        </authorList>
    </citation>
    <scope>FUNCTION</scope>
    <scope>INTERACTION WITH BRCA2</scope>
    <scope>SUBCELLULAR LOCATION</scope>
    <scope>TISSUE SPECIFICITY</scope>
    <scope>DEVELOPMENTAL STAGE</scope>
    <scope>DISRUPTION PHENOTYPE</scope>
</reference>
<reference key="7">
    <citation type="journal article" date="2020" name="Cell Rep.">
        <title>Meiosis-Specific C19orf57/4930432K21Rik/BRME1 Modulates Localization of RAD51 and DMC1 to DSBs in Mouse Meiotic Recombination.</title>
        <authorList>
            <person name="Takemoto K."/>
            <person name="Tani N."/>
            <person name="Takada-Horisawa Y."/>
            <person name="Fujimura S."/>
            <person name="Tanno N."/>
            <person name="Yamane M."/>
            <person name="Okamura K."/>
            <person name="Sugimoto M."/>
            <person name="Araki K."/>
            <person name="Ishiguro K.I."/>
        </authorList>
    </citation>
    <scope>INTERACTION WITH BRME1</scope>
</reference>
<reference key="8">
    <citation type="journal article" date="2020" name="Elife">
        <title>A missense in HSF2BP causing primary ovarian insufficiency affects meiotic recombination by its novel interactor C19ORF57/BRME1.</title>
        <authorList>
            <person name="Felipe-Medina N."/>
            <person name="Caburet S."/>
            <person name="Sanchez-Saez F."/>
            <person name="Condezo Y.B."/>
            <person name="de Rooij D.G."/>
            <person name="Gomez-H L."/>
            <person name="Garcia-Valiente R."/>
            <person name="Todeschini A.L."/>
            <person name="Duque P."/>
            <person name="Sanchez-Martin M.A."/>
            <person name="Shalev S.A."/>
            <person name="Llano E."/>
            <person name="Veitia R.A."/>
            <person name="Pendas A.M."/>
        </authorList>
    </citation>
    <scope>FUNCTION</scope>
    <scope>MUTAGENESIS OF SER-167</scope>
    <scope>DISRUPTION PHENOTYPE</scope>
    <scope>SUBCELLULAR LOCATION</scope>
    <scope>INTERACTION WITH BRCA2 AND BRME1</scope>
</reference>
<reference key="9">
    <citation type="journal article" date="2020" name="Nat. Commun.">
        <title>The BRCA2-MEILB2-BRME1 complex governs meiotic recombination and impairs the mitotic BRCA2-RAD51 function in cancer cells.</title>
        <authorList>
            <person name="Zhang J."/>
            <person name="Gurusaran M."/>
            <person name="Fujiwara Y."/>
            <person name="Zhang K."/>
            <person name="Echbarthi M."/>
            <person name="Vorontsov E."/>
            <person name="Guo R."/>
            <person name="Pendlebury D.F."/>
            <person name="Alam I."/>
            <person name="Livera G."/>
            <person name="Emmanuelle M."/>
            <person name="Wang P.J."/>
            <person name="Nandakumar J."/>
            <person name="Davies O.R."/>
            <person name="Shibuya H."/>
        </authorList>
    </citation>
    <scope>FUNCTION</scope>
    <scope>INTERACTION WITH BRME1; BRCA2; SPATA22; MEIOB AND RAD51</scope>
    <scope>TISSUE SPECIFICITY</scope>
    <scope>SUBCELLULAR LOCATION</scope>
    <scope>MUTAGENESIS OF ARG-204</scope>
</reference>
<reference key="10">
    <citation type="journal article" date="2020" name="Nucleic Acids Res.">
        <title>MEIOK21: a new component of meiotic recombination bridges required for spermatogenesis.</title>
        <authorList>
            <person name="Shang Y."/>
            <person name="Huang T."/>
            <person name="Liu H."/>
            <person name="Liu Y."/>
            <person name="Liang H."/>
            <person name="Yu X."/>
            <person name="Li M."/>
            <person name="Zhai B."/>
            <person name="Yang X."/>
            <person name="Wei Y."/>
            <person name="Wang G."/>
            <person name="Chen Z."/>
            <person name="Wang S."/>
            <person name="Zhang L."/>
        </authorList>
    </citation>
    <scope>FUNCTION</scope>
    <scope>INTERACTION WITH BRME1</scope>
    <scope>SUBCELLULAR LOCATION</scope>
</reference>
<feature type="chain" id="PRO_0000437125" description="Heat shock factor 2-binding protein">
    <location>
        <begin position="1"/>
        <end position="338"/>
    </location>
</feature>
<feature type="region of interest" description="Disordered" evidence="3">
    <location>
        <begin position="1"/>
        <end position="20"/>
    </location>
</feature>
<feature type="region of interest" description="Interaction with BRME1" evidence="7">
    <location>
        <begin position="18"/>
        <end position="55"/>
    </location>
</feature>
<feature type="region of interest" description="Interaction with BRCA2" evidence="7">
    <location>
        <begin position="87"/>
        <end position="338"/>
    </location>
</feature>
<feature type="coiled-coil region" evidence="2">
    <location>
        <begin position="12"/>
        <end position="126"/>
    </location>
</feature>
<feature type="mutagenesis site" description="Mutant females show reduced fertility with smaller litter sizes. Produces DNA repair defects during meiotic prophase I. Reduces loading of BRME1 and HSF2BP at the recombination nodules. Males show a slight non-significant reduction in fertility. No effect on interaction with BRCA2 and BRME1. No effect on subcellular location. Reduces BRME1 expression." evidence="10">
    <original>S</original>
    <variation>L</variation>
    <location>
        <position position="167"/>
    </location>
</feature>
<feature type="mutagenesis site" description="Abolishes interaction with BRCA2 and location to double-strand breaks in chromosomes." evidence="7">
    <original>R</original>
    <variation>T</variation>
    <location>
        <position position="204"/>
    </location>
</feature>
<feature type="strand" evidence="19">
    <location>
        <begin position="24"/>
        <end position="28"/>
    </location>
</feature>
<feature type="helix" evidence="19">
    <location>
        <begin position="29"/>
        <end position="45"/>
    </location>
</feature>
<feature type="helix" evidence="19">
    <location>
        <begin position="46"/>
        <end position="48"/>
    </location>
</feature>
<feature type="helix" evidence="19">
    <location>
        <begin position="53"/>
        <end position="77"/>
    </location>
</feature>
<accession>Q9D4G2</accession>
<keyword id="KW-0002">3D-structure</keyword>
<keyword id="KW-0158">Chromosome</keyword>
<keyword id="KW-0175">Coiled coil</keyword>
<keyword id="KW-0963">Cytoplasm</keyword>
<keyword id="KW-1185">Reference proteome</keyword>
<keyword id="KW-0832">Ubl conjugation</keyword>
<organism evidence="18">
    <name type="scientific">Mus musculus</name>
    <name type="common">Mouse</name>
    <dbReference type="NCBI Taxonomy" id="10090"/>
    <lineage>
        <taxon>Eukaryota</taxon>
        <taxon>Metazoa</taxon>
        <taxon>Chordata</taxon>
        <taxon>Craniata</taxon>
        <taxon>Vertebrata</taxon>
        <taxon>Euteleostomi</taxon>
        <taxon>Mammalia</taxon>
        <taxon>Eutheria</taxon>
        <taxon>Euarchontoglires</taxon>
        <taxon>Glires</taxon>
        <taxon>Rodentia</taxon>
        <taxon>Myomorpha</taxon>
        <taxon>Muroidea</taxon>
        <taxon>Muridae</taxon>
        <taxon>Murinae</taxon>
        <taxon>Mus</taxon>
        <taxon>Mus</taxon>
    </lineage>
</organism>